<comment type="function">
    <text evidence="2 3 4 5 6 7 9 10 13 16 21 23 24 26 27 28 29 30 31">A helicase/nuclease that prepares dsDNA breaks (DSB) for recombinational DNA repair. Binds to DSBs and unwinds DNA via a rapid (&gt;1 kb/second) and highly processive (&gt;30 kb) ATP-dependent bidirectional helicase. Unwinds dsDNA until it encounters a Chi (crossover hotspot instigator, 5'-GCTGGTGG-3') sequence from the 3' direction. Cuts ssDNA a few nucleotides 3' to Chi site, by nicking one strand or switching the strand degraded (depending on the reaction conditions). The properties and activities of the enzyme are changed at Chi. The Chi-altered holoenzyme produces a long 3'-ssDNA overhang which facilitates RecA-binding to the ssDNA for homologous DNA recombination and repair. Holoenzyme degrades any linearized DNA that is unable to undergo homologous recombination (PubMed:123277, PubMed:4552016, PubMed:4562392). In the holoenzyme this subunit almost certainly recognizes the wild-type Chi sequence, when added to isolated RecB increases its ATP-dependent helicase processivity. The RecBC complex requires the RecD subunit for nuclease activity, but can translocate along ssDNA in both directions. The RecBCD complex does not unwind G-quadruplex DNA (PubMed:9765292).</text>
</comment>
<comment type="activity regulation">
    <text evidence="2 7">After reacting with DNA bearing a Chi site the holoenzyme is disassembled and loses exonuclease activity, DNA unwinding and Chi-directed DNA cleavage; RecB remains complexed with ssDNA, which may prevent holoenzyme reassembly (PubMed:10197988). High levels of Mg(2+) (13 mM MgCl(2+)) or incubation with DNase allow holoenzyme reassembly, suggesting it is DNA bound to RecB that prevents reassembly (PubMed:10197988).</text>
</comment>
<comment type="activity regulation">
    <text evidence="11 22">(Microbial infection) RecBCD is inhibited by the lambda virus gam protein (both GamL and GamS isoforms); in vitro a short preincubation prior to adding DNA results in maximal inhibition.</text>
</comment>
<comment type="subunit">
    <text evidence="1 8 10 12 14 20 23 29">Heterotrimer of RecB, RecC and RecD. All subunits contribute to DNA-binding. Interacts with YgbT (Cas1) (PubMed:21219465).</text>
</comment>
<comment type="subunit">
    <text evidence="11">(Microbial infection) Lambda virus GamS protein interacts with the enzyme without displacing any of the subunits.</text>
</comment>
<comment type="domain">
    <text evidence="17 18">The holoenzyme may undergo conformational shifts upon DNA binding: the nuclease domain of RecB may swing away from the DNA exit tunnel in RecC. When Chi DNA binds to the RecC tunnel, the nuclease domain may then swing back to its original position (that seen in crystal structures), allowing it to nick the DNA 3' of the Chi site and then rotate to load RecA. At high Mg(2+) the nuclease domain may swing back more frequently, explaining differences seen in assays performed at high Mg(2+) (PubMed:25073102). As ssDNA is unwound and fed to the RecD subunit the latter transmits conformational changes through each subunit to activate the RecB nuclease (PubMed:27644322).</text>
</comment>
<comment type="disruption phenotype">
    <text evidence="4 19 24 25">Decreased degradation of DNA with free ends that is unable to undergo homologous recombination, which can fortuitously lead to more efficient viral infection (PubMed:123277, PubMed:4562392). Cells are deficient in DNA recombination repair and have increased sensitivity to UV light. The cultures have many inviable cells (PubMed:6389498). Cells can be transformed with retron Ec48-containing plasmids (PubMed:33157039).</text>
</comment>
<comment type="miscellaneous">
    <text evidence="1 32 33">In the RecBCD complex, RecB has a slow 3'-5' helicase, an exonuclease activity and loads RecA onto ssDNA, RecD has a fast 5'-3' helicase activity while RecC stimulates the ATPase and processivity of the RecB helicase and contributes to recognition of the Chi site.</text>
</comment>
<comment type="similarity">
    <text evidence="1">Belongs to the RecC family.</text>
</comment>
<evidence type="ECO:0000255" key="1">
    <source>
        <dbReference type="HAMAP-Rule" id="MF_01486"/>
    </source>
</evidence>
<evidence type="ECO:0000269" key="2">
    <source>
    </source>
</evidence>
<evidence type="ECO:0000269" key="3">
    <source>
    </source>
</evidence>
<evidence type="ECO:0000269" key="4">
    <source>
    </source>
</evidence>
<evidence type="ECO:0000269" key="5">
    <source>
    </source>
</evidence>
<evidence type="ECO:0000269" key="6">
    <source>
    </source>
</evidence>
<evidence type="ECO:0000269" key="7">
    <source>
    </source>
</evidence>
<evidence type="ECO:0000269" key="8">
    <source>
    </source>
</evidence>
<evidence type="ECO:0000269" key="9">
    <source>
    </source>
</evidence>
<evidence type="ECO:0000269" key="10">
    <source>
    </source>
</evidence>
<evidence type="ECO:0000269" key="11">
    <source>
    </source>
</evidence>
<evidence type="ECO:0000269" key="12">
    <source>
    </source>
</evidence>
<evidence type="ECO:0000269" key="13">
    <source>
    </source>
</evidence>
<evidence type="ECO:0000269" key="14">
    <source>
    </source>
</evidence>
<evidence type="ECO:0000269" key="15">
    <source>
    </source>
</evidence>
<evidence type="ECO:0000269" key="16">
    <source>
    </source>
</evidence>
<evidence type="ECO:0000269" key="17">
    <source>
    </source>
</evidence>
<evidence type="ECO:0000269" key="18">
    <source>
    </source>
</evidence>
<evidence type="ECO:0000269" key="19">
    <source>
    </source>
</evidence>
<evidence type="ECO:0000269" key="20">
    <source>
    </source>
</evidence>
<evidence type="ECO:0000269" key="21">
    <source>
    </source>
</evidence>
<evidence type="ECO:0000269" key="22">
    <source>
    </source>
</evidence>
<evidence type="ECO:0000269" key="23">
    <source>
    </source>
</evidence>
<evidence type="ECO:0000269" key="24">
    <source>
    </source>
</evidence>
<evidence type="ECO:0000269" key="25">
    <source>
    </source>
</evidence>
<evidence type="ECO:0000269" key="26">
    <source>
    </source>
</evidence>
<evidence type="ECO:0000269" key="27">
    <source>
    </source>
</evidence>
<evidence type="ECO:0000269" key="28">
    <source>
    </source>
</evidence>
<evidence type="ECO:0000269" key="29">
    <source>
    </source>
</evidence>
<evidence type="ECO:0000269" key="30">
    <source>
    </source>
</evidence>
<evidence type="ECO:0000269" key="31">
    <source>
    </source>
</evidence>
<evidence type="ECO:0000303" key="32">
    <source>
    </source>
</evidence>
<evidence type="ECO:0000303" key="33">
    <source>
    </source>
</evidence>
<evidence type="ECO:0000303" key="34">
    <source>
    </source>
</evidence>
<evidence type="ECO:0000303" key="35">
    <source>
    </source>
</evidence>
<evidence type="ECO:0007744" key="36">
    <source>
        <dbReference type="PDB" id="1W36"/>
    </source>
</evidence>
<evidence type="ECO:0007744" key="37">
    <source>
        <dbReference type="PDB" id="3K70"/>
    </source>
</evidence>
<evidence type="ECO:0007744" key="38">
    <source>
        <dbReference type="PDB" id="5LD2"/>
    </source>
</evidence>
<evidence type="ECO:0007744" key="39">
    <source>
        <dbReference type="PDB" id="5MBV"/>
    </source>
</evidence>
<evidence type="ECO:0007829" key="40">
    <source>
        <dbReference type="PDB" id="1W36"/>
    </source>
</evidence>
<evidence type="ECO:0007829" key="41">
    <source>
        <dbReference type="PDB" id="8B1R"/>
    </source>
</evidence>
<evidence type="ECO:0007829" key="42">
    <source>
        <dbReference type="PDB" id="8B1T"/>
    </source>
</evidence>
<proteinExistence type="evidence at protein level"/>
<accession>P07648</accession>
<accession>Q2MA15</accession>
<accession>Q9RNX9</accession>
<name>RECC_ECOLI</name>
<sequence length="1122" mass="128848">MLRVYHSNRLDVLEALMEFIVERERLDDPFEPEMILVQSTGMAQWLQMTLSQKFGIAANIDFPLPASFIWDMFVRVLPEIPKESAFNKQSMSWKLMTLLPQLLEREDFTLLRHYLTDDSDKRKLFQLSSKAADLFDQYLVYRPDWLAQWETGHLVEGLGEAQAWQAPLWKALVEYTHQLGQPRWHRANLYQRFIETLESATTCPPGLPSRVFICGISALPPVYLQALQALGKHIEIHLLFTNPCRYYWGDIKDPAYLAKLLTRQRRHSFEDRELPLFRDSENAGQLFNSDGEQDVGNPLLASWGKLGRDYIYLLSDLESSQELDAFVDVTPDNLLHNIQSDILELENRAVAGVNIEEFSRSDNKRPLDPLDSSITFHVCHSPQREVEVLHDRLLAMLEEDPTLTPRDIIVMVADIDSYSPFIQAVFGSAPADRYLPYAISDRRARQSHPVLEAFISLLSLPDSRFVSEDVLALLDVPVLAARFDITEEGLRYLRQWVNESGIRWGIDDDNVRELELPATGQHTWRFGLTRMLLGYAMESAQGEWQSVLPYDESSGLIAELVGHLASLLMQLNIWRRGLAQERPLEEWLPVCRDMLNAFFLPDAETEAAMTLIEQQWQAIIAEGLGAQYGDAVPLSLLRDELAQRLDQERISQRFLAGPVNICTLMPMRSIPFKVVCLLGMNDGVYPRQLAPLGFDLMSQKPKRGDRSRRDDDRYLFLEALISAQQKLYISYIGRSIQDNSERFPSVLVQELIDYIGQSHYLPGDEALNCDESEARVKAHLTCLHTRMPFDPQNYQPGERQSYAREWLPAASQAGKAHSEFVQPLPFTLPETVPLETLQRFWAHPVRAFFQMRLQVNFRTEDSEIPDTEPFILEGLSRYQINQQLLNALVEQDDAERLFRRFRAAGDLPYGAFGEIFWETQCQEMQQLADRVIACRQPGQSMEIDLACNGVQITGWLPQVQPDGLLRWRPSLLSVAQGMQLWLEHLVYCASGGNGESRLFLRKDGEWRFPPLAAEQALHYLSQLIEGYREGMSAPLLVLPESGGAWLKTCYDAQNDAMLDDDSTLQKARTKFLQAYEGNMMVRGEGDDIWYQRLWRQLTPETMEAIVEQSQRFLLPLFRFNQS</sequence>
<keyword id="KW-0002">3D-structure</keyword>
<keyword id="KW-0067">ATP-binding</keyword>
<keyword id="KW-0903">Direct protein sequencing</keyword>
<keyword id="KW-0227">DNA damage</keyword>
<keyword id="KW-0234">DNA repair</keyword>
<keyword id="KW-0238">DNA-binding</keyword>
<keyword id="KW-0269">Exonuclease</keyword>
<keyword id="KW-0347">Helicase</keyword>
<keyword id="KW-0378">Hydrolase</keyword>
<keyword id="KW-0540">Nuclease</keyword>
<keyword id="KW-0547">Nucleotide-binding</keyword>
<keyword id="KW-1185">Reference proteome</keyword>
<protein>
    <recommendedName>
        <fullName evidence="1">RecBCD enzyme subunit RecC</fullName>
    </recommendedName>
    <alternativeName>
        <fullName>Exodeoxyribonuclease V 125 kDa polypeptide</fullName>
    </alternativeName>
    <alternativeName>
        <fullName evidence="34">Exodeoxyribonuclease V gamma chain</fullName>
    </alternativeName>
    <alternativeName>
        <fullName evidence="1">Exonuclease V subunit RecC</fullName>
        <shortName evidence="1">ExoV subunit RecC</shortName>
    </alternativeName>
    <alternativeName>
        <fullName evidence="1">Helicase/nuclease RecBCD subunit RecC</fullName>
    </alternativeName>
</protein>
<gene>
    <name evidence="1 35" type="primary">recC</name>
    <name type="ordered locus">b2822</name>
    <name type="ordered locus">JW2790</name>
</gene>
<reference key="1">
    <citation type="journal article" date="1986" name="Nucleic Acids Res.">
        <title>Complete nucleotide sequence of the Escherichia coli recC gene and of the thyA-recC intergenic region.</title>
        <authorList>
            <person name="Finch P.W."/>
            <person name="Wilson R.E."/>
            <person name="Brown K."/>
            <person name="Hickson I.D."/>
            <person name="Tomkinson A.E."/>
            <person name="Emmerson P.T."/>
        </authorList>
    </citation>
    <scope>NUCLEOTIDE SEQUENCE [GENOMIC DNA]</scope>
    <scope>PROTEIN SEQUENCE OF 1-12</scope>
</reference>
<reference key="2">
    <citation type="journal article" date="1997" name="Science">
        <title>The complete genome sequence of Escherichia coli K-12.</title>
        <authorList>
            <person name="Blattner F.R."/>
            <person name="Plunkett G. III"/>
            <person name="Bloch C.A."/>
            <person name="Perna N.T."/>
            <person name="Burland V."/>
            <person name="Riley M."/>
            <person name="Collado-Vides J."/>
            <person name="Glasner J.D."/>
            <person name="Rode C.K."/>
            <person name="Mayhew G.F."/>
            <person name="Gregor J."/>
            <person name="Davis N.W."/>
            <person name="Kirkpatrick H.A."/>
            <person name="Goeden M.A."/>
            <person name="Rose D.J."/>
            <person name="Mau B."/>
            <person name="Shao Y."/>
        </authorList>
    </citation>
    <scope>NUCLEOTIDE SEQUENCE [LARGE SCALE GENOMIC DNA]</scope>
    <source>
        <strain>K12 / MG1655 / ATCC 47076</strain>
    </source>
</reference>
<reference key="3">
    <citation type="journal article" date="2006" name="Mol. Syst. Biol.">
        <title>Highly accurate genome sequences of Escherichia coli K-12 strains MG1655 and W3110.</title>
        <authorList>
            <person name="Hayashi K."/>
            <person name="Morooka N."/>
            <person name="Yamamoto Y."/>
            <person name="Fujita K."/>
            <person name="Isono K."/>
            <person name="Choi S."/>
            <person name="Ohtsubo E."/>
            <person name="Baba T."/>
            <person name="Wanner B.L."/>
            <person name="Mori H."/>
            <person name="Horiuchi T."/>
        </authorList>
    </citation>
    <scope>NUCLEOTIDE SEQUENCE [LARGE SCALE GENOMIC DNA]</scope>
    <source>
        <strain>K12 / W3110 / ATCC 27325 / DSM 5911</strain>
    </source>
</reference>
<reference key="4">
    <citation type="journal article" date="2000" name="J. Mol. Biol.">
        <title>A novel, 11 nucleotide variant of chi, chi*: one of a class of sequences defining the Escherichia coli recombination hotspot chi.</title>
        <authorList>
            <person name="Arnold D.A."/>
            <person name="Handa N."/>
            <person name="Kobayashi I."/>
            <person name="Kowalczykowski S.C."/>
        </authorList>
    </citation>
    <scope>VARIANT RECC-1004 647-GLN--LEU-655 DELINS LYS-ASN-VAL-SER-ALA-SER-VAL-PHE</scope>
    <scope>FUNCTION IN RECOGNITION OF CHI</scope>
</reference>
<reference key="5">
    <citation type="journal article" date="1986" name="Nucleic Acids Res.">
        <title>Complete nucleotide sequence of the Escherichia coli ptr gene encoding protease III.</title>
        <authorList>
            <person name="Finch P.W."/>
            <person name="Wilson R.E."/>
            <person name="Brown K."/>
            <person name="Hickson I.D."/>
            <person name="Emmerson P.T."/>
        </authorList>
    </citation>
    <scope>NUCLEOTIDE SEQUENCE [GENOMIC DNA] OF 1114-1122</scope>
</reference>
<reference key="6">
    <citation type="journal article" date="1972" name="J. Bacteriol.">
        <title>Degradation of bacteriophage lambda deoxyribonucleic acid after restriction by Escherichia coli K-12.</title>
        <authorList>
            <person name="Simmon V.F."/>
            <person name="Lederberg S."/>
        </authorList>
    </citation>
    <scope>FUNCTION IN DEGRADATION OF LAMBDA VIRUS DNA</scope>
    <scope>DISRUPTION PHENOTYPE</scope>
    <source>
        <strain>K12</strain>
    </source>
</reference>
<reference key="7">
    <citation type="journal article" date="1972" name="J. Biol. Chem.">
        <title>Purification and properties of the recBC DNase of Escherichia coli K-12.</title>
        <authorList>
            <person name="Goldmark P.J."/>
            <person name="Linn S."/>
        </authorList>
    </citation>
    <scope>FUNCTION AS AN ENDO- AND EXODEOXYRIBONUCLEASE</scope>
    <scope>ATP-DEPENDENCE</scope>
    <scope>SUBUNIT</scope>
    <source>
        <strain>K12</strain>
    </source>
</reference>
<reference key="8">
    <citation type="journal article" date="1973" name="J. Biol. Chem.">
        <title>The recBC deoxyribonuclease of Escherichia coli K-12. Substrate specificity and reaction intermediates.</title>
        <authorList>
            <person name="Karu A.E."/>
            <person name="MacKay V."/>
            <person name="Goldmark P.J."/>
            <person name="Linn S."/>
        </authorList>
    </citation>
    <scope>FUNCTION</scope>
    <scope>SUBSTRATES</scope>
    <scope>PROCESSIVITY</scope>
</reference>
<reference key="9">
    <citation type="journal article" date="1973" name="Proc. Natl. Acad. Sci. U.S.A.">
        <title>Purification and properties of the gamma-protein specified by bacteriophage lambda: an inhibitor of the host RecBC recombination enzyme.</title>
        <authorList>
            <person name="Sakaki Y."/>
            <person name="Karu A.E."/>
            <person name="Linn S."/>
            <person name="Echols H."/>
        </authorList>
    </citation>
    <scope>ACTIVITY REGULATION BY LAMBDA GAM PROTEIN (MICROBIAL INFECTION)</scope>
</reference>
<reference key="10">
    <citation type="journal article" date="1975" name="J. Virol.">
        <title>Transfection of Escherichia coli spheroplasts. V. Activity of recBC nuclease in rec+ and rec minus spheroplasts measured with different forms of bacteriophage DNA.</title>
        <authorList>
            <person name="Benzinger R."/>
            <person name="Enquist L.W."/>
            <person name="Skalka A."/>
        </authorList>
    </citation>
    <scope>FUNCTION IN DEGRADATION OF VIRUS DNA</scope>
    <scope>DISRUPTION PHENOTYPE</scope>
</reference>
<reference key="11">
    <citation type="journal article" date="1984" name="J. Bacteriol.">
        <title>Escherichia coli recBC deletion mutants.</title>
        <authorList>
            <person name="Chaudhury A.M."/>
            <person name="Smith G.R."/>
        </authorList>
    </citation>
    <scope>DISRUPTION PHENOTYPE</scope>
</reference>
<reference key="12">
    <citation type="journal article" date="1986" name="Proc. Natl. Acad. Sci. U.S.A.">
        <title>recD: the gene for an essential third subunit of exonuclease V.</title>
        <authorList>
            <person name="Amundsen S.K."/>
            <person name="Taylor A.F."/>
            <person name="Chaudhury A.M."/>
            <person name="Smith G.R."/>
        </authorList>
    </citation>
    <scope>OPERON</scope>
    <scope>SUBUNIT</scope>
</reference>
<reference key="13">
    <citation type="journal article" date="1991" name="J. Bacteriol.">
        <title>Lambda Gam protein inhibits the helicase and chi-stimulated recombination activities of Escherichia coli RecBCD enzyme.</title>
        <authorList>
            <person name="Murphy K.C."/>
        </authorList>
    </citation>
    <scope>ACTIVITY REGULATION BY LAMBDA GAM PROTEIN (MICROBIAL INFECTION)</scope>
    <scope>INTERACTION WITH LAMBDA GAMS (MICROBIAL INFECTION)</scope>
</reference>
<reference key="14">
    <citation type="journal article" date="1992" name="Proc. Natl. Acad. Sci. U.S.A.">
        <title>RecBCD enzyme is altered upon cutting DNA at a chi recombination hotspot.</title>
        <authorList>
            <person name="Taylor A.F."/>
            <person name="Smith G.R."/>
        </authorList>
    </citation>
    <scope>FUNCTION</scope>
    <scope>ACTIVITY REGULATION</scope>
</reference>
<reference key="15">
    <citation type="journal article" date="1992" name="J. Biol. Chem.">
        <title>Reconstitution of the activities of the RecBCD holoenzyme of Escherichia coli from the purified subunits.</title>
        <authorList>
            <person name="Masterson C."/>
            <person name="Boehmer P.E."/>
            <person name="McDonald F."/>
            <person name="Chaudhuri S."/>
            <person name="Hickson I.D."/>
            <person name="Emmerson P.T."/>
        </authorList>
    </citation>
    <scope>FUNCTION OF RECBCD AS AN EXONUCLEASE; HELICASE AND ATPASE</scope>
    <scope>SUBUNIT</scope>
</reference>
<reference key="16">
    <citation type="journal article" date="1995" name="J. Biol. Chem.">
        <title>Role of the Escherichia coli recombination hotspot, chi, in RecABCD-dependent homologous pairing.</title>
        <authorList>
            <person name="Dixon D.A."/>
            <person name="Kowalczykowski S.C."/>
        </authorList>
    </citation>
    <scope>FUNCTION IN HOMOLOGOUS RECOMBINATION</scope>
</reference>
<reference key="17">
    <citation type="journal article" date="1997" name="Cell">
        <title>The translocating RecBCD enzyme stimulates recombination by directing RecA protein onto ssDNA in a chi-regulated manner.</title>
        <authorList>
            <person name="Anderson D.G."/>
            <person name="Kowalczykowski S.C."/>
        </authorList>
    </citation>
    <scope>FUNCTION IN RECA-LOADING</scope>
</reference>
<reference key="18">
    <citation type="journal article" date="1997" name="Proc. Natl. Acad. Sci. U.S.A.">
        <title>The recombination hotspot Chi is recognized by the translocating RecBCD enzyme as the single strand of DNA containing the sequence 5'-GCTGGTGG-3'.</title>
        <authorList>
            <person name="Bianco P.R."/>
            <person name="Kowalczykowski S.C."/>
        </authorList>
    </citation>
    <scope>FUNCTION IN RECOGNITION OF CHI</scope>
</reference>
<reference key="19">
    <citation type="journal article" date="1998" name="J. Mol. Biol.">
        <title>Identification of the nuclease active site in the multifunctional RecBCD enzyme by creation of a chimeric enzyme.</title>
        <authorList>
            <person name="Yu M."/>
            <person name="Souaya J."/>
            <person name="Julin D.A."/>
        </authorList>
    </citation>
    <scope>FUNCTION IN PROCESSIVITY</scope>
</reference>
<reference key="20">
    <citation type="journal article" date="1998" name="J. Biol. Chem.">
        <title>The Bloom's syndrome helicase unwinds G4 DNA.</title>
        <authorList>
            <person name="Sun H."/>
            <person name="Karow J.K."/>
            <person name="Hickson I.D."/>
            <person name="Maizels N."/>
        </authorList>
    </citation>
    <scope>DOES NOT UNWIND G-QUADRUPLEX DNA</scope>
</reference>
<reference key="21">
    <citation type="journal article" date="1998" name="Proc. Natl. Acad. Sci. U.S.A.">
        <title>The 30-kDa C-terminal domain of the RecB protein is critical for the nuclease activity, but not the helicase activity, of the RecBCD enzyme from Escherichia coli.</title>
        <authorList>
            <person name="Yu M."/>
            <person name="Souaya J."/>
            <person name="Julin D.A."/>
        </authorList>
    </citation>
    <scope>FUNCTION IN PROCESSIVITY</scope>
    <scope>INTERACTION WITH RECB</scope>
</reference>
<reference key="22">
    <citation type="journal article" date="1999" name="Genes Dev.">
        <title>Regulation of homologous recombination: Chi inactivates RecBCD enzyme by disassembly of the three subunits.</title>
        <authorList>
            <person name="Taylor A.F."/>
            <person name="Smith G.R."/>
        </authorList>
    </citation>
    <scope>FUNCTION</scope>
    <scope>ACTIVITY REGULATION</scope>
</reference>
<reference key="23">
    <citation type="journal article" date="2003" name="Nature">
        <title>RecBCD enzyme is a DNA helicase with fast and slow motors of opposite polarity.</title>
        <authorList>
            <person name="Taylor A.F."/>
            <person name="Smith G.R."/>
        </authorList>
    </citation>
    <scope>FUNCTION OF RECBCD AS A BIPOLAR HELICASE</scope>
</reference>
<reference key="24">
    <citation type="journal article" date="2003" name="Nature">
        <title>RecBCD enzyme is a bipolar DNA helicase.</title>
        <authorList>
            <person name="Dillingham M.S."/>
            <person name="Spies M."/>
            <person name="Kowalczykowski S.C."/>
        </authorList>
    </citation>
    <scope>FUNCTION OF RECBCD AS A BIPOLAR HELICASE</scope>
</reference>
<reference key="25">
    <citation type="journal article" date="2005" name="J. Biol. Chem.">
        <title>Bipolar DNA translocation contributes to highly processive DNA unwinding by RecBCD enzyme.</title>
        <authorList>
            <person name="Dillingham M.S."/>
            <person name="Webb M.R."/>
            <person name="Kowalczykowski S.C."/>
        </authorList>
    </citation>
    <scope>FUNCTION</scope>
</reference>
<reference key="26">
    <citation type="journal article" date="2007" name="Genes Dev.">
        <title>Intersubunit signaling in RecBCD enzyme, a complex protein machine regulated by Chi hot spots.</title>
        <authorList>
            <person name="Amundsen S.K."/>
            <person name="Taylor A.F."/>
            <person name="Reddy M."/>
            <person name="Smith G.R."/>
        </authorList>
    </citation>
    <scope>FUNCTION</scope>
</reference>
<reference key="27">
    <citation type="journal article" date="2010" name="Nat. Struct. Mol. Biol.">
        <title>Escherichia coli RecBC helicase has two translocase activities controlled by a single ATPase motor.</title>
        <authorList>
            <person name="Wu C.G."/>
            <person name="Bradford C."/>
            <person name="Lohman T.M."/>
        </authorList>
    </citation>
    <scope>FUNCTION IN DUAL DIRECTION TRANSLOCATION</scope>
</reference>
<reference key="28">
    <citation type="journal article" date="2011" name="Mol. Microbiol.">
        <title>A dual function of the CRISPR-Cas system in bacterial antivirus immunity and DNA repair.</title>
        <authorList>
            <person name="Babu M."/>
            <person name="Beloglazova N."/>
            <person name="Flick R."/>
            <person name="Graham C."/>
            <person name="Skarina T."/>
            <person name="Nocek B."/>
            <person name="Gagarinova A."/>
            <person name="Pogoutse O."/>
            <person name="Brown G."/>
            <person name="Binkowski A."/>
            <person name="Phanse S."/>
            <person name="Joachimiak A."/>
            <person name="Koonin E.V."/>
            <person name="Savchenko A."/>
            <person name="Emili A."/>
            <person name="Greenblatt J."/>
            <person name="Edwards A.M."/>
            <person name="Yakunin A.F."/>
        </authorList>
    </citation>
    <scope>INTERACTION WITH CAS1</scope>
    <source>
        <strain>K12</strain>
    </source>
</reference>
<reference key="29">
    <citation type="journal article" date="2012" name="Proc. Natl. Acad. Sci. U.S.A.">
        <title>Molecular determinants responsible for recognition of the single-stranded DNA regulatory sequence, chi, by RecBCD enzyme.</title>
        <authorList>
            <person name="Handa N."/>
            <person name="Yang L."/>
            <person name="Dillingham M.S."/>
            <person name="Kobayashi I."/>
            <person name="Wigley D.B."/>
            <person name="Kowalczykowski S.C."/>
        </authorList>
    </citation>
    <scope>DNA-BINDING</scope>
    <scope>MUTAGENESIS OF GLN-38; LEU-64; TRP-70; ASP-133; LEU-134; ASP-136; GLN-137; ARG-142; ARG-186 AND ASP-705</scope>
</reference>
<reference key="30">
    <citation type="journal article" date="2013" name="Nature">
        <title>DNA unwinding heterogeneity by RecBCD results from static molecules able to equilibrate.</title>
        <authorList>
            <person name="Liu B."/>
            <person name="Baskin R.J."/>
            <person name="Kowalczykowski S.C."/>
        </authorList>
    </citation>
    <scope>FUNCTION</scope>
    <scope>ENZYME RATE</scope>
    <scope>ENZYME STATE SWITCHING</scope>
</reference>
<reference key="31">
    <citation type="journal article" date="2014" name="J. Mol. Biol.">
        <title>Control of RecBCD enzyme activity by DNA binding- and Chi hotspot-dependent conformational changes.</title>
        <authorList>
            <person name="Taylor A.F."/>
            <person name="Amundsen S.K."/>
            <person name="Guttman M."/>
            <person name="Lee K.K."/>
            <person name="Luo J."/>
            <person name="Ranish J."/>
            <person name="Smith G.R."/>
        </authorList>
    </citation>
    <scope>FUNCTION</scope>
    <scope>MODEL OF DOMAIN MOVEMENT</scope>
</reference>
<reference key="32">
    <citation type="journal article" date="2020" name="Cell">
        <title>Bacterial Retrons Function In Anti-Phage Defense.</title>
        <authorList>
            <person name="Millman A."/>
            <person name="Bernheim A."/>
            <person name="Stokar-Avihail A."/>
            <person name="Fedorenko T."/>
            <person name="Voichek M."/>
            <person name="Leavitt A."/>
            <person name="Oppenheimer-Shaanan Y."/>
            <person name="Sorek R."/>
        </authorList>
    </citation>
    <scope>DISRUPTION PHENOTYPE</scope>
    <source>
        <strain>K12 / BW25141</strain>
    </source>
</reference>
<reference evidence="36" key="33">
    <citation type="journal article" date="2004" name="Nature">
        <title>Crystal structure of RecBCD enzyme reveals a machine for processing DNA breaks.</title>
        <authorList>
            <person name="Singleton M.R."/>
            <person name="Dillingham M.S."/>
            <person name="Gaudier M."/>
            <person name="Kowalczykowski S.C."/>
            <person name="Wigley D.B."/>
        </authorList>
    </citation>
    <scope>X-RAY CRYSTALLOGRAPHY (3.1 ANGSTROMS) IN COMPLEX WITH DNA</scope>
    <scope>SUBUNIT</scope>
</reference>
<reference evidence="37" key="34">
    <citation type="journal article" date="2008" name="EMBO J.">
        <title>DNA binding to RecD: role of the 1B domain in SF1B helicase activity.</title>
        <authorList>
            <person name="Saikrishnan K."/>
            <person name="Griffiths S.P."/>
            <person name="Cook N."/>
            <person name="Court R."/>
            <person name="Wigley D.B."/>
        </authorList>
    </citation>
    <scope>X-RAY CRYSTALLOGRAPHY (3.59 ANGSTROMS) IN COMPLEX WITH DNA</scope>
    <scope>SUBUNIT</scope>
</reference>
<reference evidence="38" key="35">
    <citation type="journal article" date="2016" name="Elife">
        <title>Mechanism for nuclease regulation in RecBCD.</title>
        <authorList>
            <person name="Wilkinson M."/>
            <person name="Chaban Y."/>
            <person name="Wigley D.B."/>
        </authorList>
    </citation>
    <scope>STRUCTURE BY ELECTRON MICROSCOPY (3.83 ANGSTROMS) OF RECBCD IN COMPLEX WITH FORKED DNA SUBSTRATE</scope>
    <scope>DOMAIN</scope>
    <scope>DNA-BINDING</scope>
</reference>
<reference evidence="39" key="36">
    <citation type="journal article" date="2016" name="Elife">
        <title>Structural basis for the inhibition of RecBCD by Gam and its synergistic antibacterial effect with quinolones.</title>
        <authorList>
            <person name="Wilkinson M."/>
            <person name="Troman L."/>
            <person name="Wan Nur Ismah W.A."/>
            <person name="Chaban Y."/>
            <person name="Avison M.B."/>
            <person name="Dillingham M.S."/>
            <person name="Wigley D.B."/>
        </authorList>
    </citation>
    <scope>STRUCTURE BY ELECTRON MICROSCOPY (3.80 ANGSTROMS)</scope>
</reference>
<reference key="37">
    <citation type="journal article" date="2008" name="Microbiol. Mol. Biol. Rev.">
        <title>RecBCD enzyme and the repair of double-stranded DNA breaks.</title>
        <authorList>
            <person name="Dillingham M.S."/>
            <person name="Kowalczykowski S.C."/>
        </authorList>
    </citation>
    <scope>REVIEW</scope>
</reference>
<reference key="38">
    <citation type="journal article" date="2012" name="Microbiol. Mol. Biol. Rev.">
        <title>How RecBCD enzyme and Chi promote DNA break repair and recombination: a molecular biologist's view.</title>
        <authorList>
            <person name="Smith G.R."/>
        </authorList>
    </citation>
    <scope>REVIEW</scope>
</reference>
<feature type="chain" id="PRO_0000087120" description="RecBCD enzyme subunit RecC">
    <location>
        <begin position="1"/>
        <end position="1122"/>
    </location>
</feature>
<feature type="sequence variant" description="In recC-1004; holoenzyme prefers an altered Chi over wild-type Chi sequence. Pseudorevertant of a frameshift mutation at aa 647." evidence="3">
    <original>QERISQRFL</original>
    <variation>KNVSASVF</variation>
    <location>
        <begin position="647"/>
        <end position="655"/>
    </location>
</feature>
<feature type="mutagenesis site" description="Acts at variant Chi sequences." evidence="15">
    <original>Q</original>
    <variation>A</variation>
    <location>
        <position position="38"/>
    </location>
</feature>
<feature type="mutagenesis site" description="Does not act at Chi." evidence="15">
    <original>L</original>
    <variation>A</variation>
    <location>
        <position position="64"/>
    </location>
</feature>
<feature type="mutagenesis site" description="Does not act at Chi." evidence="15">
    <original>W</original>
    <variation>A</variation>
    <location>
        <position position="70"/>
    </location>
</feature>
<feature type="mutagenesis site" description="Does not act at Chi." evidence="15">
    <original>D</original>
    <variation>A</variation>
    <location>
        <position position="133"/>
    </location>
</feature>
<feature type="mutagenesis site" description="Acts at variant Chi sequences." evidence="15">
    <original>L</original>
    <variation>A</variation>
    <location>
        <position position="134"/>
    </location>
</feature>
<feature type="mutagenesis site" description="Does not act at Chi." evidence="15">
    <original>D</original>
    <variation>A</variation>
    <location>
        <position position="136"/>
    </location>
</feature>
<feature type="mutagenesis site" description="Acts at variant Chi sequences." evidence="15">
    <original>Q</original>
    <variation>A</variation>
    <location>
        <position position="137"/>
    </location>
</feature>
<feature type="mutagenesis site" description="Acts at variant Chi sequences." evidence="15">
    <original>R</original>
    <variation>A</variation>
    <location>
        <position position="142"/>
    </location>
</feature>
<feature type="mutagenesis site" description="Does not act at Chi." evidence="15">
    <original>R</original>
    <variation>A</variation>
    <variation>C</variation>
    <variation>H</variation>
    <location>
        <position position="186"/>
    </location>
</feature>
<feature type="mutagenesis site" description="Acts at variant Chi sequences." evidence="15">
    <original>D</original>
    <variation>A</variation>
    <variation>H</variation>
    <location>
        <position position="705"/>
    </location>
</feature>
<feature type="strand" evidence="40">
    <location>
        <begin position="2"/>
        <end position="8"/>
    </location>
</feature>
<feature type="helix" evidence="40">
    <location>
        <begin position="10"/>
        <end position="22"/>
    </location>
</feature>
<feature type="strand" evidence="41">
    <location>
        <begin position="27"/>
        <end position="31"/>
    </location>
</feature>
<feature type="strand" evidence="40">
    <location>
        <begin position="34"/>
        <end position="36"/>
    </location>
</feature>
<feature type="helix" evidence="40">
    <location>
        <begin position="40"/>
        <end position="52"/>
    </location>
</feature>
<feature type="strand" evidence="41">
    <location>
        <begin position="57"/>
        <end position="61"/>
    </location>
</feature>
<feature type="helix" evidence="40">
    <location>
        <begin position="65"/>
        <end position="76"/>
    </location>
</feature>
<feature type="strand" evidence="40">
    <location>
        <begin position="77"/>
        <end position="79"/>
    </location>
</feature>
<feature type="helix" evidence="40">
    <location>
        <begin position="88"/>
        <end position="102"/>
    </location>
</feature>
<feature type="strand" evidence="40">
    <location>
        <begin position="104"/>
        <end position="106"/>
    </location>
</feature>
<feature type="helix" evidence="40">
    <location>
        <begin position="109"/>
        <end position="114"/>
    </location>
</feature>
<feature type="strand" evidence="41">
    <location>
        <begin position="119"/>
        <end position="121"/>
    </location>
</feature>
<feature type="helix" evidence="40">
    <location>
        <begin position="122"/>
        <end position="138"/>
    </location>
</feature>
<feature type="helix" evidence="40">
    <location>
        <begin position="143"/>
        <end position="150"/>
    </location>
</feature>
<feature type="helix" evidence="40">
    <location>
        <begin position="162"/>
        <end position="178"/>
    </location>
</feature>
<feature type="turn" evidence="40">
    <location>
        <begin position="187"/>
        <end position="189"/>
    </location>
</feature>
<feature type="helix" evidence="40">
    <location>
        <begin position="190"/>
        <end position="198"/>
    </location>
</feature>
<feature type="strand" evidence="40">
    <location>
        <begin position="209"/>
        <end position="215"/>
    </location>
</feature>
<feature type="helix" evidence="40">
    <location>
        <begin position="221"/>
        <end position="230"/>
    </location>
</feature>
<feature type="turn" evidence="40">
    <location>
        <begin position="231"/>
        <end position="233"/>
    </location>
</feature>
<feature type="strand" evidence="40">
    <location>
        <begin position="234"/>
        <end position="241"/>
    </location>
</feature>
<feature type="strand" evidence="41">
    <location>
        <begin position="243"/>
        <end position="246"/>
    </location>
</feature>
<feature type="helix" evidence="40">
    <location>
        <begin position="254"/>
        <end position="257"/>
    </location>
</feature>
<feature type="turn" evidence="40">
    <location>
        <begin position="258"/>
        <end position="260"/>
    </location>
</feature>
<feature type="strand" evidence="40">
    <location>
        <begin position="264"/>
        <end position="270"/>
    </location>
</feature>
<feature type="strand" evidence="41">
    <location>
        <begin position="273"/>
        <end position="278"/>
    </location>
</feature>
<feature type="helix" evidence="40">
    <location>
        <begin position="279"/>
        <end position="282"/>
    </location>
</feature>
<feature type="helix" evidence="41">
    <location>
        <begin position="283"/>
        <end position="286"/>
    </location>
</feature>
<feature type="strand" evidence="40">
    <location>
        <begin position="288"/>
        <end position="291"/>
    </location>
</feature>
<feature type="helix" evidence="40">
    <location>
        <begin position="298"/>
        <end position="303"/>
    </location>
</feature>
<feature type="helix" evidence="40">
    <location>
        <begin position="305"/>
        <end position="314"/>
    </location>
</feature>
<feature type="strand" evidence="40">
    <location>
        <begin position="318"/>
        <end position="324"/>
    </location>
</feature>
<feature type="helix" evidence="40">
    <location>
        <begin position="334"/>
        <end position="344"/>
    </location>
</feature>
<feature type="helix" evidence="40">
    <location>
        <begin position="355"/>
        <end position="359"/>
    </location>
</feature>
<feature type="strand" evidence="40">
    <location>
        <begin position="364"/>
        <end position="366"/>
    </location>
</feature>
<feature type="strand" evidence="40">
    <location>
        <begin position="373"/>
        <end position="381"/>
    </location>
</feature>
<feature type="helix" evidence="40">
    <location>
        <begin position="382"/>
        <end position="399"/>
    </location>
</feature>
<feature type="helix" evidence="40">
    <location>
        <begin position="405"/>
        <end position="407"/>
    </location>
</feature>
<feature type="strand" evidence="40">
    <location>
        <begin position="408"/>
        <end position="413"/>
    </location>
</feature>
<feature type="helix" evidence="40">
    <location>
        <begin position="415"/>
        <end position="425"/>
    </location>
</feature>
<feature type="turn" evidence="42">
    <location>
        <begin position="431"/>
        <end position="433"/>
    </location>
</feature>
<feature type="strand" evidence="41">
    <location>
        <begin position="437"/>
        <end position="439"/>
    </location>
</feature>
<feature type="strand" evidence="40">
    <location>
        <begin position="441"/>
        <end position="443"/>
    </location>
</feature>
<feature type="helix" evidence="40">
    <location>
        <begin position="445"/>
        <end position="447"/>
    </location>
</feature>
<feature type="helix" evidence="40">
    <location>
        <begin position="449"/>
        <end position="457"/>
    </location>
</feature>
<feature type="helix" evidence="40">
    <location>
        <begin position="458"/>
        <end position="462"/>
    </location>
</feature>
<feature type="helix" evidence="40">
    <location>
        <begin position="467"/>
        <end position="473"/>
    </location>
</feature>
<feature type="helix" evidence="40">
    <location>
        <begin position="477"/>
        <end position="482"/>
    </location>
</feature>
<feature type="helix" evidence="40">
    <location>
        <begin position="487"/>
        <end position="500"/>
    </location>
</feature>
<feature type="helix" evidence="40">
    <location>
        <begin position="508"/>
        <end position="513"/>
    </location>
</feature>
<feature type="strand" evidence="40">
    <location>
        <begin position="520"/>
        <end position="523"/>
    </location>
</feature>
<feature type="helix" evidence="40">
    <location>
        <begin position="524"/>
        <end position="535"/>
    </location>
</feature>
<feature type="turn" evidence="42">
    <location>
        <begin position="539"/>
        <end position="541"/>
    </location>
</feature>
<feature type="strand" evidence="40">
    <location>
        <begin position="544"/>
        <end position="546"/>
    </location>
</feature>
<feature type="strand" evidence="41">
    <location>
        <begin position="551"/>
        <end position="553"/>
    </location>
</feature>
<feature type="helix" evidence="40">
    <location>
        <begin position="558"/>
        <end position="577"/>
    </location>
</feature>
<feature type="helix" evidence="40">
    <location>
        <begin position="584"/>
        <end position="587"/>
    </location>
</feature>
<feature type="helix" evidence="40">
    <location>
        <begin position="590"/>
        <end position="598"/>
    </location>
</feature>
<feature type="helix" evidence="40">
    <location>
        <begin position="604"/>
        <end position="625"/>
    </location>
</feature>
<feature type="helix" evidence="40">
    <location>
        <begin position="634"/>
        <end position="647"/>
    </location>
</feature>
<feature type="turn" evidence="40">
    <location>
        <begin position="652"/>
        <end position="655"/>
    </location>
</feature>
<feature type="strand" evidence="40">
    <location>
        <begin position="656"/>
        <end position="658"/>
    </location>
</feature>
<feature type="strand" evidence="40">
    <location>
        <begin position="660"/>
        <end position="662"/>
    </location>
</feature>
<feature type="strand" evidence="40">
    <location>
        <begin position="672"/>
        <end position="678"/>
    </location>
</feature>
<feature type="turn" evidence="40">
    <location>
        <begin position="682"/>
        <end position="684"/>
    </location>
</feature>
<feature type="helix" evidence="40">
    <location>
        <begin position="696"/>
        <end position="699"/>
    </location>
</feature>
<feature type="helix" evidence="40">
    <location>
        <begin position="708"/>
        <end position="722"/>
    </location>
</feature>
<feature type="strand" evidence="40">
    <location>
        <begin position="723"/>
        <end position="732"/>
    </location>
</feature>
<feature type="strand" evidence="40">
    <location>
        <begin position="736"/>
        <end position="738"/>
    </location>
</feature>
<feature type="helix" evidence="40">
    <location>
        <begin position="746"/>
        <end position="756"/>
    </location>
</feature>
<feature type="strand" evidence="40">
    <location>
        <begin position="765"/>
        <end position="767"/>
    </location>
</feature>
<feature type="helix" evidence="40">
    <location>
        <begin position="769"/>
        <end position="780"/>
    </location>
</feature>
<feature type="strand" evidence="41">
    <location>
        <begin position="781"/>
        <end position="783"/>
    </location>
</feature>
<feature type="helix" evidence="40">
    <location>
        <begin position="791"/>
        <end position="793"/>
    </location>
</feature>
<feature type="strand" evidence="40">
    <location>
        <begin position="794"/>
        <end position="797"/>
    </location>
</feature>
<feature type="helix" evidence="40">
    <location>
        <begin position="804"/>
        <end position="806"/>
    </location>
</feature>
<feature type="helix" evidence="40">
    <location>
        <begin position="807"/>
        <end position="810"/>
    </location>
</feature>
<feature type="strand" evidence="41">
    <location>
        <begin position="830"/>
        <end position="833"/>
    </location>
</feature>
<feature type="helix" evidence="40">
    <location>
        <begin position="834"/>
        <end position="840"/>
    </location>
</feature>
<feature type="strand" evidence="40">
    <location>
        <begin position="841"/>
        <end position="843"/>
    </location>
</feature>
<feature type="helix" evidence="40">
    <location>
        <begin position="844"/>
        <end position="850"/>
    </location>
</feature>
<feature type="turn" evidence="40">
    <location>
        <begin position="851"/>
        <end position="853"/>
    </location>
</feature>
<feature type="helix" evidence="40">
    <location>
        <begin position="874"/>
        <end position="889"/>
    </location>
</feature>
<feature type="helix" evidence="40">
    <location>
        <begin position="894"/>
        <end position="904"/>
    </location>
</feature>
<feature type="helix" evidence="40">
    <location>
        <begin position="910"/>
        <end position="932"/>
    </location>
</feature>
<feature type="strand" evidence="40">
    <location>
        <begin position="939"/>
        <end position="947"/>
    </location>
</feature>
<feature type="strand" evidence="40">
    <location>
        <begin position="950"/>
        <end position="959"/>
    </location>
</feature>
<feature type="strand" evidence="40">
    <location>
        <begin position="961"/>
        <end position="967"/>
    </location>
</feature>
<feature type="helix" evidence="40">
    <location>
        <begin position="974"/>
        <end position="989"/>
    </location>
</feature>
<feature type="strand" evidence="40">
    <location>
        <begin position="995"/>
        <end position="999"/>
    </location>
</feature>
<feature type="helix" evidence="40">
    <location>
        <begin position="1001"/>
        <end position="1003"/>
    </location>
</feature>
<feature type="strand" evidence="40">
    <location>
        <begin position="1005"/>
        <end position="1008"/>
    </location>
</feature>
<feature type="helix" evidence="40">
    <location>
        <begin position="1013"/>
        <end position="1029"/>
    </location>
</feature>
<feature type="turn" evidence="40">
    <location>
        <begin position="1030"/>
        <end position="1032"/>
    </location>
</feature>
<feature type="helix" evidence="40">
    <location>
        <begin position="1039"/>
        <end position="1049"/>
    </location>
</feature>
<feature type="helix" evidence="40">
    <location>
        <begin position="1053"/>
        <end position="1055"/>
    </location>
</feature>
<feature type="helix" evidence="40">
    <location>
        <begin position="1061"/>
        <end position="1075"/>
    </location>
</feature>
<feature type="strand" evidence="40">
    <location>
        <begin position="1079"/>
        <end position="1081"/>
    </location>
</feature>
<feature type="helix" evidence="40">
    <location>
        <begin position="1088"/>
        <end position="1091"/>
    </location>
</feature>
<feature type="helix" evidence="40">
    <location>
        <begin position="1099"/>
        <end position="1117"/>
    </location>
</feature>
<organism>
    <name type="scientific">Escherichia coli (strain K12)</name>
    <dbReference type="NCBI Taxonomy" id="83333"/>
    <lineage>
        <taxon>Bacteria</taxon>
        <taxon>Pseudomonadati</taxon>
        <taxon>Pseudomonadota</taxon>
        <taxon>Gammaproteobacteria</taxon>
        <taxon>Enterobacterales</taxon>
        <taxon>Enterobacteriaceae</taxon>
        <taxon>Escherichia</taxon>
    </lineage>
</organism>
<dbReference type="EMBL" id="X03966">
    <property type="protein sequence ID" value="CAA27604.1"/>
    <property type="molecule type" value="Genomic_DNA"/>
</dbReference>
<dbReference type="EMBL" id="U29581">
    <property type="protein sequence ID" value="AAB40469.1"/>
    <property type="molecule type" value="Genomic_DNA"/>
</dbReference>
<dbReference type="EMBL" id="U00096">
    <property type="protein sequence ID" value="AAC75861.1"/>
    <property type="molecule type" value="Genomic_DNA"/>
</dbReference>
<dbReference type="EMBL" id="AP009048">
    <property type="protein sequence ID" value="BAE76891.1"/>
    <property type="molecule type" value="Genomic_DNA"/>
</dbReference>
<dbReference type="EMBL" id="AF176618">
    <property type="protein sequence ID" value="AAD54314.1"/>
    <property type="molecule type" value="Genomic_DNA"/>
</dbReference>
<dbReference type="EMBL" id="X06227">
    <property type="protein sequence ID" value="CAA29575.1"/>
    <property type="molecule type" value="Genomic_DNA"/>
</dbReference>
<dbReference type="PIR" id="A24137">
    <property type="entry name" value="NCECXV"/>
</dbReference>
<dbReference type="RefSeq" id="NP_417299.1">
    <property type="nucleotide sequence ID" value="NC_000913.3"/>
</dbReference>
<dbReference type="RefSeq" id="WP_000946938.1">
    <property type="nucleotide sequence ID" value="NZ_LN832404.1"/>
</dbReference>
<dbReference type="PDB" id="1W36">
    <property type="method" value="X-ray"/>
    <property type="resolution" value="3.10 A"/>
    <property type="chains" value="C/F=1-1122"/>
</dbReference>
<dbReference type="PDB" id="3K70">
    <property type="method" value="X-ray"/>
    <property type="resolution" value="3.59 A"/>
    <property type="chains" value="C/F=1-1122"/>
</dbReference>
<dbReference type="PDB" id="5LD2">
    <property type="method" value="EM"/>
    <property type="resolution" value="3.83 A"/>
    <property type="chains" value="C=1-1122"/>
</dbReference>
<dbReference type="PDB" id="5MBV">
    <property type="method" value="EM"/>
    <property type="resolution" value="3.80 A"/>
    <property type="chains" value="C=1-1122"/>
</dbReference>
<dbReference type="PDB" id="6SJB">
    <property type="method" value="EM"/>
    <property type="resolution" value="3.70 A"/>
    <property type="chains" value="C=1-1122"/>
</dbReference>
<dbReference type="PDB" id="6SJE">
    <property type="method" value="EM"/>
    <property type="resolution" value="4.10 A"/>
    <property type="chains" value="C=1-1122"/>
</dbReference>
<dbReference type="PDB" id="6SJF">
    <property type="method" value="EM"/>
    <property type="resolution" value="3.90 A"/>
    <property type="chains" value="C=1-1122"/>
</dbReference>
<dbReference type="PDB" id="6SJG">
    <property type="method" value="EM"/>
    <property type="resolution" value="3.80 A"/>
    <property type="chains" value="C=1-1122"/>
</dbReference>
<dbReference type="PDB" id="6T2U">
    <property type="method" value="EM"/>
    <property type="resolution" value="3.60 A"/>
    <property type="chains" value="C=1-1122"/>
</dbReference>
<dbReference type="PDB" id="6T2V">
    <property type="method" value="EM"/>
    <property type="resolution" value="3.80 A"/>
    <property type="chains" value="C=1-1122"/>
</dbReference>
<dbReference type="PDB" id="7MR0">
    <property type="method" value="EM"/>
    <property type="resolution" value="3.70 A"/>
    <property type="chains" value="C=1-1122"/>
</dbReference>
<dbReference type="PDB" id="7MR1">
    <property type="method" value="EM"/>
    <property type="resolution" value="4.20 A"/>
    <property type="chains" value="C=1-1122"/>
</dbReference>
<dbReference type="PDB" id="7MR2">
    <property type="method" value="EM"/>
    <property type="resolution" value="4.30 A"/>
    <property type="chains" value="C=1-1122"/>
</dbReference>
<dbReference type="PDB" id="7MR3">
    <property type="method" value="EM"/>
    <property type="resolution" value="3.60 A"/>
    <property type="chains" value="C=1-1122"/>
</dbReference>
<dbReference type="PDB" id="7MR4">
    <property type="method" value="EM"/>
    <property type="resolution" value="4.50 A"/>
    <property type="chains" value="C=1-1122"/>
</dbReference>
<dbReference type="PDB" id="8B1R">
    <property type="method" value="EM"/>
    <property type="resolution" value="3.20 A"/>
    <property type="chains" value="C=1-1122"/>
</dbReference>
<dbReference type="PDB" id="8B1T">
    <property type="method" value="EM"/>
    <property type="resolution" value="3.40 A"/>
    <property type="chains" value="C=1-1122"/>
</dbReference>
<dbReference type="PDB" id="8B1U">
    <property type="method" value="EM"/>
    <property type="resolution" value="3.80 A"/>
    <property type="chains" value="C=1-1122"/>
</dbReference>
<dbReference type="PDBsum" id="1W36"/>
<dbReference type="PDBsum" id="3K70"/>
<dbReference type="PDBsum" id="5LD2"/>
<dbReference type="PDBsum" id="5MBV"/>
<dbReference type="PDBsum" id="6SJB"/>
<dbReference type="PDBsum" id="6SJE"/>
<dbReference type="PDBsum" id="6SJF"/>
<dbReference type="PDBsum" id="6SJG"/>
<dbReference type="PDBsum" id="6T2U"/>
<dbReference type="PDBsum" id="6T2V"/>
<dbReference type="PDBsum" id="7MR0"/>
<dbReference type="PDBsum" id="7MR1"/>
<dbReference type="PDBsum" id="7MR2"/>
<dbReference type="PDBsum" id="7MR3"/>
<dbReference type="PDBsum" id="7MR4"/>
<dbReference type="PDBsum" id="8B1R"/>
<dbReference type="PDBsum" id="8B1T"/>
<dbReference type="PDBsum" id="8B1U"/>
<dbReference type="EMDB" id="EMD-10214"/>
<dbReference type="EMDB" id="EMD-10215"/>
<dbReference type="EMDB" id="EMD-10216"/>
<dbReference type="EMDB" id="EMD-10217"/>
<dbReference type="EMDB" id="EMD-10369"/>
<dbReference type="EMDB" id="EMD-10370"/>
<dbReference type="EMDB" id="EMD-15803"/>
<dbReference type="EMDB" id="EMD-15804"/>
<dbReference type="EMDB" id="EMD-15805"/>
<dbReference type="EMDB" id="EMD-23952"/>
<dbReference type="EMDB" id="EMD-23953"/>
<dbReference type="EMDB" id="EMD-23954"/>
<dbReference type="EMDB" id="EMD-23955"/>
<dbReference type="EMDB" id="EMD-23956"/>
<dbReference type="EMDB" id="EMD-3460"/>
<dbReference type="EMDB" id="EMD-4038"/>
<dbReference type="SMR" id="P07648"/>
<dbReference type="BioGRID" id="4261821">
    <property type="interactions" value="371"/>
</dbReference>
<dbReference type="ComplexPortal" id="CPX-2197">
    <property type="entry name" value="Exodeoxyribonuclease V complex"/>
</dbReference>
<dbReference type="DIP" id="DIP-10650N"/>
<dbReference type="FunCoup" id="P07648">
    <property type="interactions" value="77"/>
</dbReference>
<dbReference type="IntAct" id="P07648">
    <property type="interactions" value="3"/>
</dbReference>
<dbReference type="MINT" id="P07648"/>
<dbReference type="STRING" id="511145.b2822"/>
<dbReference type="ChEMBL" id="CHEMBL2095232"/>
<dbReference type="jPOST" id="P07648"/>
<dbReference type="PaxDb" id="511145-b2822"/>
<dbReference type="EnsemblBacteria" id="AAC75861">
    <property type="protein sequence ID" value="AAC75861"/>
    <property type="gene ID" value="b2822"/>
</dbReference>
<dbReference type="GeneID" id="75203786"/>
<dbReference type="GeneID" id="947294"/>
<dbReference type="KEGG" id="ecj:JW2790"/>
<dbReference type="KEGG" id="eco:b2822"/>
<dbReference type="KEGG" id="ecoc:C3026_15495"/>
<dbReference type="PATRIC" id="fig|1411691.4.peg.3914"/>
<dbReference type="EchoBASE" id="EB0818"/>
<dbReference type="eggNOG" id="COG1330">
    <property type="taxonomic scope" value="Bacteria"/>
</dbReference>
<dbReference type="HOGENOM" id="CLU_007513_0_0_6"/>
<dbReference type="InParanoid" id="P07648"/>
<dbReference type="OMA" id="IGQSHCL"/>
<dbReference type="OrthoDB" id="9762834at2"/>
<dbReference type="PhylomeDB" id="P07648"/>
<dbReference type="BioCyc" id="EcoCyc:EG10825-MONOMER"/>
<dbReference type="BioCyc" id="MetaCyc:EG10825-MONOMER"/>
<dbReference type="BRENDA" id="3.1.11.5">
    <property type="organism ID" value="2026"/>
</dbReference>
<dbReference type="EvolutionaryTrace" id="P07648"/>
<dbReference type="PRO" id="PR:P07648"/>
<dbReference type="Proteomes" id="UP000000625">
    <property type="component" value="Chromosome"/>
</dbReference>
<dbReference type="GO" id="GO:0009338">
    <property type="term" value="C:exodeoxyribonuclease V complex"/>
    <property type="evidence" value="ECO:0000314"/>
    <property type="project" value="EcoCyc"/>
</dbReference>
<dbReference type="GO" id="GO:0005524">
    <property type="term" value="F:ATP binding"/>
    <property type="evidence" value="ECO:0007669"/>
    <property type="project" value="UniProtKB-UniRule"/>
</dbReference>
<dbReference type="GO" id="GO:0003677">
    <property type="term" value="F:DNA binding"/>
    <property type="evidence" value="ECO:0007669"/>
    <property type="project" value="UniProtKB-UniRule"/>
</dbReference>
<dbReference type="GO" id="GO:0003678">
    <property type="term" value="F:DNA helicase activity"/>
    <property type="evidence" value="ECO:0007669"/>
    <property type="project" value="UniProtKB-UniRule"/>
</dbReference>
<dbReference type="GO" id="GO:0008854">
    <property type="term" value="F:exodeoxyribonuclease V activity"/>
    <property type="evidence" value="ECO:0000314"/>
    <property type="project" value="EcoCyc"/>
</dbReference>
<dbReference type="GO" id="GO:0044355">
    <property type="term" value="P:clearance of foreign intracellular DNA"/>
    <property type="evidence" value="ECO:0000315"/>
    <property type="project" value="UniProtKB"/>
</dbReference>
<dbReference type="GO" id="GO:0006310">
    <property type="term" value="P:DNA recombination"/>
    <property type="evidence" value="ECO:0000314"/>
    <property type="project" value="EcoCyc"/>
</dbReference>
<dbReference type="GO" id="GO:0000724">
    <property type="term" value="P:double-strand break repair via homologous recombination"/>
    <property type="evidence" value="ECO:0000304"/>
    <property type="project" value="EcoCyc"/>
</dbReference>
<dbReference type="GO" id="GO:0000725">
    <property type="term" value="P:recombinational repair"/>
    <property type="evidence" value="ECO:0000314"/>
    <property type="project" value="ComplexPortal"/>
</dbReference>
<dbReference type="GO" id="GO:0009314">
    <property type="term" value="P:response to radiation"/>
    <property type="evidence" value="ECO:0000315"/>
    <property type="project" value="EcoCyc"/>
</dbReference>
<dbReference type="CDD" id="cd22353">
    <property type="entry name" value="RecC_C-like"/>
    <property type="match status" value="1"/>
</dbReference>
<dbReference type="FunFam" id="1.10.10.160:FF:000003">
    <property type="entry name" value="RecBCD enzyme subunit RecC"/>
    <property type="match status" value="1"/>
</dbReference>
<dbReference type="FunFam" id="1.10.10.990:FF:000001">
    <property type="entry name" value="RecBCD enzyme subunit RecC"/>
    <property type="match status" value="1"/>
</dbReference>
<dbReference type="FunFam" id="3.40.50.300:FF:001068">
    <property type="entry name" value="RecBCD enzyme subunit RecC"/>
    <property type="match status" value="1"/>
</dbReference>
<dbReference type="FunFam" id="3.40.50.300:FF:001153">
    <property type="entry name" value="RecBCD enzyme subunit RecC"/>
    <property type="match status" value="1"/>
</dbReference>
<dbReference type="Gene3D" id="1.10.10.160">
    <property type="match status" value="1"/>
</dbReference>
<dbReference type="Gene3D" id="1.10.10.990">
    <property type="match status" value="1"/>
</dbReference>
<dbReference type="Gene3D" id="3.40.50.10930">
    <property type="match status" value="1"/>
</dbReference>
<dbReference type="Gene3D" id="3.40.50.300">
    <property type="entry name" value="P-loop containing nucleotide triphosphate hydrolases"/>
    <property type="match status" value="2"/>
</dbReference>
<dbReference type="HAMAP" id="MF_01486">
    <property type="entry name" value="RecC"/>
    <property type="match status" value="1"/>
</dbReference>
<dbReference type="InterPro" id="IPR013986">
    <property type="entry name" value="DExx_box_DNA_helicase_dom_sf"/>
</dbReference>
<dbReference type="InterPro" id="IPR027417">
    <property type="entry name" value="P-loop_NTPase"/>
</dbReference>
<dbReference type="InterPro" id="IPR006697">
    <property type="entry name" value="RecC"/>
</dbReference>
<dbReference type="InterPro" id="IPR041500">
    <property type="entry name" value="RecC_C"/>
</dbReference>
<dbReference type="InterPro" id="IPR011335">
    <property type="entry name" value="Restrct_endonuc-II-like"/>
</dbReference>
<dbReference type="NCBIfam" id="NF008289">
    <property type="entry name" value="PRK11069.1"/>
    <property type="match status" value="1"/>
</dbReference>
<dbReference type="NCBIfam" id="TIGR01450">
    <property type="entry name" value="recC"/>
    <property type="match status" value="1"/>
</dbReference>
<dbReference type="PANTHER" id="PTHR30591">
    <property type="entry name" value="RECBCD ENZYME SUBUNIT RECC"/>
    <property type="match status" value="1"/>
</dbReference>
<dbReference type="PANTHER" id="PTHR30591:SF1">
    <property type="entry name" value="RECBCD ENZYME SUBUNIT RECC"/>
    <property type="match status" value="1"/>
</dbReference>
<dbReference type="Pfam" id="PF04257">
    <property type="entry name" value="Exonuc_V_gamma"/>
    <property type="match status" value="1"/>
</dbReference>
<dbReference type="Pfam" id="PF17946">
    <property type="entry name" value="RecC_C"/>
    <property type="match status" value="1"/>
</dbReference>
<dbReference type="PIRSF" id="PIRSF000980">
    <property type="entry name" value="RecC"/>
    <property type="match status" value="1"/>
</dbReference>
<dbReference type="SUPFAM" id="SSF52540">
    <property type="entry name" value="P-loop containing nucleoside triphosphate hydrolases"/>
    <property type="match status" value="2"/>
</dbReference>
<dbReference type="SUPFAM" id="SSF52980">
    <property type="entry name" value="Restriction endonuclease-like"/>
    <property type="match status" value="1"/>
</dbReference>